<name>PGK_PARMW</name>
<sequence>MAKRSLASLNAGDLSGKRVLVRVDFNVPLNEAGAITDDTRIRAALPTINDLIGKGAKVILSAHFGRPKGQVNDAMRLTPVAARLSELLGKPVAKTDSCIGPDAEAKVNAMADGDVVLLENVRFFAEEEKNDAGFAEKLAGLAEVYVNDAFGAAHRAHASTEGVTKFLKPAVAGFLMEKELQYLQGAVDEPKRPLAAIVGGSKVSSKIGVLEALIDKCDKVLIGGGMIFTFYKARGLSVGKSLVEEDKLELAKELEAKAKAKGVELLLPTDVVLADNFAPDANSQVADVTAIPDGWMGLDIGPDAVKVFQDALGDCQTVIWNGPMGVFEFEKFATGTNAIATTLAELSGKGCCTIIGGGDSVAAVEKAGLADKMSHISTGGGASLELLEGKVLPGVAALNDAA</sequence>
<proteinExistence type="inferred from homology"/>
<protein>
    <recommendedName>
        <fullName evidence="1">Phosphoglycerate kinase</fullName>
        <ecNumber evidence="1">2.7.2.3</ecNumber>
    </recommendedName>
</protein>
<dbReference type="EC" id="2.7.2.3" evidence="1"/>
<dbReference type="EMBL" id="BX569695">
    <property type="protein sequence ID" value="CAE08844.1"/>
    <property type="molecule type" value="Genomic_DNA"/>
</dbReference>
<dbReference type="RefSeq" id="WP_011129182.1">
    <property type="nucleotide sequence ID" value="NC_005070.1"/>
</dbReference>
<dbReference type="SMR" id="Q7U3V0"/>
<dbReference type="STRING" id="84588.SYNW2329"/>
<dbReference type="KEGG" id="syw:SYNW2329"/>
<dbReference type="eggNOG" id="COG0126">
    <property type="taxonomic scope" value="Bacteria"/>
</dbReference>
<dbReference type="HOGENOM" id="CLU_025427_0_2_3"/>
<dbReference type="UniPathway" id="UPA00109">
    <property type="reaction ID" value="UER00185"/>
</dbReference>
<dbReference type="Proteomes" id="UP000001422">
    <property type="component" value="Chromosome"/>
</dbReference>
<dbReference type="GO" id="GO:0005829">
    <property type="term" value="C:cytosol"/>
    <property type="evidence" value="ECO:0007669"/>
    <property type="project" value="TreeGrafter"/>
</dbReference>
<dbReference type="GO" id="GO:0043531">
    <property type="term" value="F:ADP binding"/>
    <property type="evidence" value="ECO:0007669"/>
    <property type="project" value="TreeGrafter"/>
</dbReference>
<dbReference type="GO" id="GO:0005524">
    <property type="term" value="F:ATP binding"/>
    <property type="evidence" value="ECO:0007669"/>
    <property type="project" value="UniProtKB-KW"/>
</dbReference>
<dbReference type="GO" id="GO:0004618">
    <property type="term" value="F:phosphoglycerate kinase activity"/>
    <property type="evidence" value="ECO:0007669"/>
    <property type="project" value="UniProtKB-UniRule"/>
</dbReference>
<dbReference type="GO" id="GO:0006094">
    <property type="term" value="P:gluconeogenesis"/>
    <property type="evidence" value="ECO:0007669"/>
    <property type="project" value="TreeGrafter"/>
</dbReference>
<dbReference type="GO" id="GO:0006096">
    <property type="term" value="P:glycolytic process"/>
    <property type="evidence" value="ECO:0007669"/>
    <property type="project" value="UniProtKB-UniRule"/>
</dbReference>
<dbReference type="CDD" id="cd00318">
    <property type="entry name" value="Phosphoglycerate_kinase"/>
    <property type="match status" value="1"/>
</dbReference>
<dbReference type="FunFam" id="3.40.50.1260:FF:000003">
    <property type="entry name" value="Phosphoglycerate kinase"/>
    <property type="match status" value="1"/>
</dbReference>
<dbReference type="FunFam" id="3.40.50.1260:FF:000006">
    <property type="entry name" value="Phosphoglycerate kinase"/>
    <property type="match status" value="1"/>
</dbReference>
<dbReference type="Gene3D" id="3.40.50.1260">
    <property type="entry name" value="Phosphoglycerate kinase, N-terminal domain"/>
    <property type="match status" value="2"/>
</dbReference>
<dbReference type="HAMAP" id="MF_00145">
    <property type="entry name" value="Phosphoglyc_kinase"/>
    <property type="match status" value="1"/>
</dbReference>
<dbReference type="InterPro" id="IPR001576">
    <property type="entry name" value="Phosphoglycerate_kinase"/>
</dbReference>
<dbReference type="InterPro" id="IPR015911">
    <property type="entry name" value="Phosphoglycerate_kinase_CS"/>
</dbReference>
<dbReference type="InterPro" id="IPR015824">
    <property type="entry name" value="Phosphoglycerate_kinase_N"/>
</dbReference>
<dbReference type="InterPro" id="IPR036043">
    <property type="entry name" value="Phosphoglycerate_kinase_sf"/>
</dbReference>
<dbReference type="PANTHER" id="PTHR11406">
    <property type="entry name" value="PHOSPHOGLYCERATE KINASE"/>
    <property type="match status" value="1"/>
</dbReference>
<dbReference type="PANTHER" id="PTHR11406:SF23">
    <property type="entry name" value="PHOSPHOGLYCERATE KINASE 1, CHLOROPLASTIC-RELATED"/>
    <property type="match status" value="1"/>
</dbReference>
<dbReference type="Pfam" id="PF00162">
    <property type="entry name" value="PGK"/>
    <property type="match status" value="1"/>
</dbReference>
<dbReference type="PIRSF" id="PIRSF000724">
    <property type="entry name" value="Pgk"/>
    <property type="match status" value="1"/>
</dbReference>
<dbReference type="PRINTS" id="PR00477">
    <property type="entry name" value="PHGLYCKINASE"/>
</dbReference>
<dbReference type="SUPFAM" id="SSF53748">
    <property type="entry name" value="Phosphoglycerate kinase"/>
    <property type="match status" value="1"/>
</dbReference>
<dbReference type="PROSITE" id="PS00111">
    <property type="entry name" value="PGLYCERATE_KINASE"/>
    <property type="match status" value="1"/>
</dbReference>
<keyword id="KW-0067">ATP-binding</keyword>
<keyword id="KW-0963">Cytoplasm</keyword>
<keyword id="KW-0324">Glycolysis</keyword>
<keyword id="KW-0418">Kinase</keyword>
<keyword id="KW-0547">Nucleotide-binding</keyword>
<keyword id="KW-0808">Transferase</keyword>
<feature type="chain" id="PRO_0000146023" description="Phosphoglycerate kinase">
    <location>
        <begin position="1"/>
        <end position="402"/>
    </location>
</feature>
<feature type="binding site" evidence="1">
    <location>
        <begin position="24"/>
        <end position="26"/>
    </location>
    <ligand>
        <name>substrate</name>
    </ligand>
</feature>
<feature type="binding site" evidence="1">
    <location>
        <position position="40"/>
    </location>
    <ligand>
        <name>substrate</name>
    </ligand>
</feature>
<feature type="binding site" evidence="1">
    <location>
        <begin position="63"/>
        <end position="66"/>
    </location>
    <ligand>
        <name>substrate</name>
    </ligand>
</feature>
<feature type="binding site" evidence="1">
    <location>
        <position position="122"/>
    </location>
    <ligand>
        <name>substrate</name>
    </ligand>
</feature>
<feature type="binding site" evidence="1">
    <location>
        <position position="155"/>
    </location>
    <ligand>
        <name>substrate</name>
    </ligand>
</feature>
<feature type="binding site" evidence="1">
    <location>
        <position position="206"/>
    </location>
    <ligand>
        <name>ATP</name>
        <dbReference type="ChEBI" id="CHEBI:30616"/>
    </ligand>
</feature>
<feature type="binding site" evidence="1">
    <location>
        <position position="297"/>
    </location>
    <ligand>
        <name>ATP</name>
        <dbReference type="ChEBI" id="CHEBI:30616"/>
    </ligand>
</feature>
<feature type="binding site" evidence="1">
    <location>
        <position position="328"/>
    </location>
    <ligand>
        <name>ATP</name>
        <dbReference type="ChEBI" id="CHEBI:30616"/>
    </ligand>
</feature>
<feature type="binding site" evidence="1">
    <location>
        <begin position="357"/>
        <end position="360"/>
    </location>
    <ligand>
        <name>ATP</name>
        <dbReference type="ChEBI" id="CHEBI:30616"/>
    </ligand>
</feature>
<evidence type="ECO:0000255" key="1">
    <source>
        <dbReference type="HAMAP-Rule" id="MF_00145"/>
    </source>
</evidence>
<comment type="catalytic activity">
    <reaction evidence="1">
        <text>(2R)-3-phosphoglycerate + ATP = (2R)-3-phospho-glyceroyl phosphate + ADP</text>
        <dbReference type="Rhea" id="RHEA:14801"/>
        <dbReference type="ChEBI" id="CHEBI:30616"/>
        <dbReference type="ChEBI" id="CHEBI:57604"/>
        <dbReference type="ChEBI" id="CHEBI:58272"/>
        <dbReference type="ChEBI" id="CHEBI:456216"/>
        <dbReference type="EC" id="2.7.2.3"/>
    </reaction>
</comment>
<comment type="pathway">
    <text evidence="1">Carbohydrate degradation; glycolysis; pyruvate from D-glyceraldehyde 3-phosphate: step 2/5.</text>
</comment>
<comment type="subunit">
    <text evidence="1">Monomer.</text>
</comment>
<comment type="subcellular location">
    <subcellularLocation>
        <location evidence="1">Cytoplasm</location>
    </subcellularLocation>
</comment>
<comment type="similarity">
    <text evidence="1">Belongs to the phosphoglycerate kinase family.</text>
</comment>
<gene>
    <name evidence="1" type="primary">pgk</name>
    <name type="ordered locus">SYNW2329</name>
</gene>
<reference key="1">
    <citation type="journal article" date="2003" name="Nature">
        <title>The genome of a motile marine Synechococcus.</title>
        <authorList>
            <person name="Palenik B."/>
            <person name="Brahamsha B."/>
            <person name="Larimer F.W."/>
            <person name="Land M.L."/>
            <person name="Hauser L."/>
            <person name="Chain P."/>
            <person name="Lamerdin J.E."/>
            <person name="Regala W."/>
            <person name="Allen E.E."/>
            <person name="McCarren J."/>
            <person name="Paulsen I.T."/>
            <person name="Dufresne A."/>
            <person name="Partensky F."/>
            <person name="Webb E.A."/>
            <person name="Waterbury J."/>
        </authorList>
    </citation>
    <scope>NUCLEOTIDE SEQUENCE [LARGE SCALE GENOMIC DNA]</scope>
    <source>
        <strain>WH8102</strain>
    </source>
</reference>
<accession>Q7U3V0</accession>
<organism>
    <name type="scientific">Parasynechococcus marenigrum (strain WH8102)</name>
    <dbReference type="NCBI Taxonomy" id="84588"/>
    <lineage>
        <taxon>Bacteria</taxon>
        <taxon>Bacillati</taxon>
        <taxon>Cyanobacteriota</taxon>
        <taxon>Cyanophyceae</taxon>
        <taxon>Synechococcales</taxon>
        <taxon>Prochlorococcaceae</taxon>
        <taxon>Parasynechococcus</taxon>
        <taxon>Parasynechococcus marenigrum</taxon>
    </lineage>
</organism>